<dbReference type="EMBL" id="CP000436">
    <property type="protein sequence ID" value="ABI26065.1"/>
    <property type="molecule type" value="Genomic_DNA"/>
</dbReference>
<dbReference type="SMR" id="Q0I0V8"/>
<dbReference type="KEGG" id="hso:HS_0163a"/>
<dbReference type="eggNOG" id="COG0333">
    <property type="taxonomic scope" value="Bacteria"/>
</dbReference>
<dbReference type="HOGENOM" id="CLU_129084_2_1_6"/>
<dbReference type="GO" id="GO:0015934">
    <property type="term" value="C:large ribosomal subunit"/>
    <property type="evidence" value="ECO:0007669"/>
    <property type="project" value="InterPro"/>
</dbReference>
<dbReference type="GO" id="GO:0003735">
    <property type="term" value="F:structural constituent of ribosome"/>
    <property type="evidence" value="ECO:0007669"/>
    <property type="project" value="InterPro"/>
</dbReference>
<dbReference type="GO" id="GO:0006412">
    <property type="term" value="P:translation"/>
    <property type="evidence" value="ECO:0007669"/>
    <property type="project" value="UniProtKB-UniRule"/>
</dbReference>
<dbReference type="Gene3D" id="1.20.5.640">
    <property type="entry name" value="Single helix bin"/>
    <property type="match status" value="1"/>
</dbReference>
<dbReference type="HAMAP" id="MF_00340">
    <property type="entry name" value="Ribosomal_bL32"/>
    <property type="match status" value="1"/>
</dbReference>
<dbReference type="InterPro" id="IPR002677">
    <property type="entry name" value="Ribosomal_bL32"/>
</dbReference>
<dbReference type="InterPro" id="IPR044957">
    <property type="entry name" value="Ribosomal_bL32_bact"/>
</dbReference>
<dbReference type="InterPro" id="IPR011332">
    <property type="entry name" value="Ribosomal_zn-bd"/>
</dbReference>
<dbReference type="NCBIfam" id="TIGR01031">
    <property type="entry name" value="rpmF_bact"/>
    <property type="match status" value="1"/>
</dbReference>
<dbReference type="PANTHER" id="PTHR35534">
    <property type="entry name" value="50S RIBOSOMAL PROTEIN L32"/>
    <property type="match status" value="1"/>
</dbReference>
<dbReference type="PANTHER" id="PTHR35534:SF1">
    <property type="entry name" value="LARGE RIBOSOMAL SUBUNIT PROTEIN BL32"/>
    <property type="match status" value="1"/>
</dbReference>
<dbReference type="Pfam" id="PF01783">
    <property type="entry name" value="Ribosomal_L32p"/>
    <property type="match status" value="1"/>
</dbReference>
<dbReference type="SUPFAM" id="SSF57829">
    <property type="entry name" value="Zn-binding ribosomal proteins"/>
    <property type="match status" value="1"/>
</dbReference>
<feature type="chain" id="PRO_0000296474" description="Large ribosomal subunit protein bL32">
    <location>
        <begin position="1"/>
        <end position="56"/>
    </location>
</feature>
<feature type="region of interest" description="Disordered" evidence="2">
    <location>
        <begin position="1"/>
        <end position="38"/>
    </location>
</feature>
<feature type="compositionally biased region" description="Basic residues" evidence="2">
    <location>
        <begin position="7"/>
        <end position="16"/>
    </location>
</feature>
<evidence type="ECO:0000255" key="1">
    <source>
        <dbReference type="HAMAP-Rule" id="MF_00340"/>
    </source>
</evidence>
<evidence type="ECO:0000256" key="2">
    <source>
        <dbReference type="SAM" id="MobiDB-lite"/>
    </source>
</evidence>
<evidence type="ECO:0000305" key="3"/>
<reference key="1">
    <citation type="journal article" date="2007" name="J. Bacteriol.">
        <title>Complete genome sequence of Haemophilus somnus (Histophilus somni) strain 129Pt and comparison to Haemophilus ducreyi 35000HP and Haemophilus influenzae Rd.</title>
        <authorList>
            <person name="Challacombe J.F."/>
            <person name="Duncan A.J."/>
            <person name="Brettin T.S."/>
            <person name="Bruce D."/>
            <person name="Chertkov O."/>
            <person name="Detter J.C."/>
            <person name="Han C.S."/>
            <person name="Misra M."/>
            <person name="Richardson P."/>
            <person name="Tapia R."/>
            <person name="Thayer N."/>
            <person name="Xie G."/>
            <person name="Inzana T.J."/>
        </authorList>
    </citation>
    <scope>NUCLEOTIDE SEQUENCE [LARGE SCALE GENOMIC DNA]</scope>
    <source>
        <strain>129Pt</strain>
    </source>
</reference>
<gene>
    <name evidence="1" type="primary">rpmF</name>
    <name type="ordered locus">HS_0163.1</name>
    <name type="ORF">HS_0163a</name>
</gene>
<accession>Q0I0V8</accession>
<comment type="similarity">
    <text evidence="1">Belongs to the bacterial ribosomal protein bL32 family.</text>
</comment>
<name>RL32_HISS1</name>
<proteinExistence type="inferred from homology"/>
<sequence>MAVQQNKKSRSRRDMRRSHDALTTAAVSVDKTSGETHLRHHVTADGYYRGRKVINK</sequence>
<organism>
    <name type="scientific">Histophilus somni (strain 129Pt)</name>
    <name type="common">Haemophilus somnus</name>
    <dbReference type="NCBI Taxonomy" id="205914"/>
    <lineage>
        <taxon>Bacteria</taxon>
        <taxon>Pseudomonadati</taxon>
        <taxon>Pseudomonadota</taxon>
        <taxon>Gammaproteobacteria</taxon>
        <taxon>Pasteurellales</taxon>
        <taxon>Pasteurellaceae</taxon>
        <taxon>Histophilus</taxon>
    </lineage>
</organism>
<protein>
    <recommendedName>
        <fullName evidence="1">Large ribosomal subunit protein bL32</fullName>
    </recommendedName>
    <alternativeName>
        <fullName evidence="3">50S ribosomal protein L32</fullName>
    </alternativeName>
</protein>
<keyword id="KW-0687">Ribonucleoprotein</keyword>
<keyword id="KW-0689">Ribosomal protein</keyword>